<comment type="catalytic activity">
    <reaction evidence="1">
        <text>tRNA(Gly) + glycine + ATP = glycyl-tRNA(Gly) + AMP + diphosphate</text>
        <dbReference type="Rhea" id="RHEA:16013"/>
        <dbReference type="Rhea" id="RHEA-COMP:9664"/>
        <dbReference type="Rhea" id="RHEA-COMP:9683"/>
        <dbReference type="ChEBI" id="CHEBI:30616"/>
        <dbReference type="ChEBI" id="CHEBI:33019"/>
        <dbReference type="ChEBI" id="CHEBI:57305"/>
        <dbReference type="ChEBI" id="CHEBI:78442"/>
        <dbReference type="ChEBI" id="CHEBI:78522"/>
        <dbReference type="ChEBI" id="CHEBI:456215"/>
        <dbReference type="EC" id="6.1.1.14"/>
    </reaction>
</comment>
<comment type="subunit">
    <text evidence="1">Tetramer of two alpha and two beta subunits.</text>
</comment>
<comment type="subcellular location">
    <subcellularLocation>
        <location evidence="1">Cytoplasm</location>
    </subcellularLocation>
</comment>
<comment type="similarity">
    <text evidence="1">Belongs to the class-II aminoacyl-tRNA synthetase family.</text>
</comment>
<proteinExistence type="inferred from homology"/>
<gene>
    <name evidence="1" type="primary">glyS</name>
    <name type="ordered locus">Adeh_1306</name>
</gene>
<name>SYGB_ANADE</name>
<dbReference type="EC" id="6.1.1.14" evidence="1"/>
<dbReference type="EMBL" id="CP000251">
    <property type="protein sequence ID" value="ABC81080.1"/>
    <property type="molecule type" value="Genomic_DNA"/>
</dbReference>
<dbReference type="RefSeq" id="WP_011420363.1">
    <property type="nucleotide sequence ID" value="NC_007760.1"/>
</dbReference>
<dbReference type="SMR" id="Q2IQJ5"/>
<dbReference type="STRING" id="290397.Adeh_1306"/>
<dbReference type="KEGG" id="ade:Adeh_1306"/>
<dbReference type="eggNOG" id="COG0751">
    <property type="taxonomic scope" value="Bacteria"/>
</dbReference>
<dbReference type="HOGENOM" id="CLU_007220_2_1_7"/>
<dbReference type="OrthoDB" id="9775440at2"/>
<dbReference type="Proteomes" id="UP000001935">
    <property type="component" value="Chromosome"/>
</dbReference>
<dbReference type="GO" id="GO:0005829">
    <property type="term" value="C:cytosol"/>
    <property type="evidence" value="ECO:0007669"/>
    <property type="project" value="TreeGrafter"/>
</dbReference>
<dbReference type="GO" id="GO:0004814">
    <property type="term" value="F:arginine-tRNA ligase activity"/>
    <property type="evidence" value="ECO:0007669"/>
    <property type="project" value="InterPro"/>
</dbReference>
<dbReference type="GO" id="GO:0005524">
    <property type="term" value="F:ATP binding"/>
    <property type="evidence" value="ECO:0007669"/>
    <property type="project" value="UniProtKB-UniRule"/>
</dbReference>
<dbReference type="GO" id="GO:0004820">
    <property type="term" value="F:glycine-tRNA ligase activity"/>
    <property type="evidence" value="ECO:0007669"/>
    <property type="project" value="UniProtKB-UniRule"/>
</dbReference>
<dbReference type="GO" id="GO:0006420">
    <property type="term" value="P:arginyl-tRNA aminoacylation"/>
    <property type="evidence" value="ECO:0007669"/>
    <property type="project" value="InterPro"/>
</dbReference>
<dbReference type="GO" id="GO:0006426">
    <property type="term" value="P:glycyl-tRNA aminoacylation"/>
    <property type="evidence" value="ECO:0007669"/>
    <property type="project" value="UniProtKB-UniRule"/>
</dbReference>
<dbReference type="HAMAP" id="MF_00255">
    <property type="entry name" value="Gly_tRNA_synth_beta"/>
    <property type="match status" value="1"/>
</dbReference>
<dbReference type="InterPro" id="IPR008909">
    <property type="entry name" value="DALR_anticod-bd"/>
</dbReference>
<dbReference type="InterPro" id="IPR015944">
    <property type="entry name" value="Gly-tRNA-synth_bsu"/>
</dbReference>
<dbReference type="InterPro" id="IPR006194">
    <property type="entry name" value="Gly-tRNA-synth_heterodimer"/>
</dbReference>
<dbReference type="NCBIfam" id="TIGR00211">
    <property type="entry name" value="glyS"/>
    <property type="match status" value="1"/>
</dbReference>
<dbReference type="PANTHER" id="PTHR30075:SF2">
    <property type="entry name" value="GLYCINE--TRNA LIGASE, CHLOROPLASTIC_MITOCHONDRIAL 2"/>
    <property type="match status" value="1"/>
</dbReference>
<dbReference type="PANTHER" id="PTHR30075">
    <property type="entry name" value="GLYCYL-TRNA SYNTHETASE"/>
    <property type="match status" value="1"/>
</dbReference>
<dbReference type="Pfam" id="PF05746">
    <property type="entry name" value="DALR_1"/>
    <property type="match status" value="1"/>
</dbReference>
<dbReference type="Pfam" id="PF02092">
    <property type="entry name" value="tRNA_synt_2f"/>
    <property type="match status" value="1"/>
</dbReference>
<dbReference type="PRINTS" id="PR01045">
    <property type="entry name" value="TRNASYNTHGB"/>
</dbReference>
<dbReference type="SMART" id="SM00836">
    <property type="entry name" value="DALR_1"/>
    <property type="match status" value="1"/>
</dbReference>
<dbReference type="SUPFAM" id="SSF109604">
    <property type="entry name" value="HD-domain/PDEase-like"/>
    <property type="match status" value="1"/>
</dbReference>
<dbReference type="PROSITE" id="PS50861">
    <property type="entry name" value="AA_TRNA_LIGASE_II_GLYAB"/>
    <property type="match status" value="1"/>
</dbReference>
<organism>
    <name type="scientific">Anaeromyxobacter dehalogenans (strain 2CP-C)</name>
    <dbReference type="NCBI Taxonomy" id="290397"/>
    <lineage>
        <taxon>Bacteria</taxon>
        <taxon>Pseudomonadati</taxon>
        <taxon>Myxococcota</taxon>
        <taxon>Myxococcia</taxon>
        <taxon>Myxococcales</taxon>
        <taxon>Cystobacterineae</taxon>
        <taxon>Anaeromyxobacteraceae</taxon>
        <taxon>Anaeromyxobacter</taxon>
    </lineage>
</organism>
<evidence type="ECO:0000255" key="1">
    <source>
        <dbReference type="HAMAP-Rule" id="MF_00255"/>
    </source>
</evidence>
<feature type="chain" id="PRO_1000197167" description="Glycine--tRNA ligase beta subunit">
    <location>
        <begin position="1"/>
        <end position="701"/>
    </location>
</feature>
<protein>
    <recommendedName>
        <fullName evidence="1">Glycine--tRNA ligase beta subunit</fullName>
        <ecNumber evidence="1">6.1.1.14</ecNumber>
    </recommendedName>
    <alternativeName>
        <fullName evidence="1">Glycyl-tRNA synthetase beta subunit</fullName>
        <shortName evidence="1">GlyRS</shortName>
    </alternativeName>
</protein>
<accession>Q2IQJ5</accession>
<keyword id="KW-0030">Aminoacyl-tRNA synthetase</keyword>
<keyword id="KW-0067">ATP-binding</keyword>
<keyword id="KW-0963">Cytoplasm</keyword>
<keyword id="KW-0436">Ligase</keyword>
<keyword id="KW-0547">Nucleotide-binding</keyword>
<keyword id="KW-0648">Protein biosynthesis</keyword>
<keyword id="KW-1185">Reference proteome</keyword>
<sequence length="701" mass="75799">MADLLFEIGAEEIPAGFVPGALRQLEDDLAKALADARLAHGEVRAVGTPRRLAVWARDVAPKQTDARTEAFGPPVAQAYDAEGKPTPAATGFARSQGVEVSALVRAQTPKGERVAVTKVEKGRKAEQVLPALLERLVAGLRFRKAMRSRFDEVTFARPVRWMVALLGGRPLKVRHGEVASGKVTYGHRFLAPKAIALKGTPDDYLAKLRRAHVLADPEERRAALLAELARAGKEAGGKVRDDPALVEQVLYLVEEPSAVVGEFERSNLELPPEVVISEMRNHQRYFAVVDGKGRLKNRFVAVSATRVKDPAVARHGYERVLRARLADARFFFEEDRKRKLHERIEDLGRRTFQAKLGSELDRAQRIGAVASGLARALGKDALVADLLEASRLAKVDLNTGMVGEFPELQGTMGAHYARLEGLKPEIADAIEDHYKPIGAAEEMPRSDLGALVAVADRLHSLVGIIGVGEKATGAADPFGLRRAAIGILRIVIARGYHLSLATAVEQTLDALAGVKLAAGRALVAEQVLDFLRGRVRAAWTERFDADLVEAVLAAGSDDVVDARRRLEALAEAKARPDFGSLAVAFKRVANIQEKAGGPGAAAVDPALLRDPAEQDLLAALEKVEQEVGARRAARDYPAVLRTVATLEPAVARFFDDVLVMAEDPALRANRLGLMRRVGALFSDLADFRKIQAEAPAQARAG</sequence>
<reference key="1">
    <citation type="submission" date="2006-01" db="EMBL/GenBank/DDBJ databases">
        <title>Complete sequence of Anaeromyxobacter dehalogenans 2CP-C.</title>
        <authorList>
            <person name="Copeland A."/>
            <person name="Lucas S."/>
            <person name="Lapidus A."/>
            <person name="Barry K."/>
            <person name="Detter J.C."/>
            <person name="Glavina T."/>
            <person name="Hammon N."/>
            <person name="Israni S."/>
            <person name="Pitluck S."/>
            <person name="Brettin T."/>
            <person name="Bruce D."/>
            <person name="Han C."/>
            <person name="Tapia R."/>
            <person name="Gilna P."/>
            <person name="Kiss H."/>
            <person name="Schmutz J."/>
            <person name="Larimer F."/>
            <person name="Land M."/>
            <person name="Kyrpides N."/>
            <person name="Anderson I."/>
            <person name="Sanford R.A."/>
            <person name="Ritalahti K.M."/>
            <person name="Thomas H.S."/>
            <person name="Kirby J.R."/>
            <person name="Zhulin I.B."/>
            <person name="Loeffler F.E."/>
            <person name="Richardson P."/>
        </authorList>
    </citation>
    <scope>NUCLEOTIDE SEQUENCE [LARGE SCALE GENOMIC DNA]</scope>
    <source>
        <strain>2CP-C</strain>
    </source>
</reference>